<feature type="chain" id="PRO_0000050031" description="Uncharacterized MFS-type transporter YxiO">
    <location>
        <begin position="1"/>
        <end position="428"/>
    </location>
</feature>
<feature type="transmembrane region" description="Helical" evidence="1">
    <location>
        <begin position="14"/>
        <end position="34"/>
    </location>
</feature>
<feature type="transmembrane region" description="Helical" evidence="1">
    <location>
        <begin position="55"/>
        <end position="75"/>
    </location>
</feature>
<feature type="transmembrane region" description="Helical" evidence="1">
    <location>
        <begin position="84"/>
        <end position="104"/>
    </location>
</feature>
<feature type="transmembrane region" description="Helical" evidence="1">
    <location>
        <begin position="107"/>
        <end position="127"/>
    </location>
</feature>
<feature type="transmembrane region" description="Helical" evidence="1">
    <location>
        <begin position="149"/>
        <end position="169"/>
    </location>
</feature>
<feature type="transmembrane region" description="Helical" evidence="1">
    <location>
        <begin position="182"/>
        <end position="202"/>
    </location>
</feature>
<feature type="transmembrane region" description="Helical" evidence="1">
    <location>
        <begin position="238"/>
        <end position="258"/>
    </location>
</feature>
<feature type="transmembrane region" description="Helical" evidence="1">
    <location>
        <begin position="272"/>
        <end position="292"/>
    </location>
</feature>
<feature type="transmembrane region" description="Helical" evidence="1">
    <location>
        <begin position="302"/>
        <end position="322"/>
    </location>
</feature>
<feature type="transmembrane region" description="Helical" evidence="1">
    <location>
        <begin position="324"/>
        <end position="344"/>
    </location>
</feature>
<feature type="transmembrane region" description="Helical" evidence="1">
    <location>
        <begin position="361"/>
        <end position="381"/>
    </location>
</feature>
<feature type="transmembrane region" description="Helical" evidence="1">
    <location>
        <begin position="392"/>
        <end position="412"/>
    </location>
</feature>
<name>YXIO_BACSU</name>
<sequence>MMKRFTKQENSWVLYDWANSAYSIVVTTAVFPLFYKSAAAESGVSAAQSTAYLGYTIAISTFILAMLGPILGTIADYEGCKKKFFGFFVSAGVASTAMLAFIPSEHWLLLLLFYTVSAIGFSGANVFYDAFLVDVTPEKRMNLVSARGFGLGYIGSTIPFIISIAVILLAQAETIPVSVSAASQLSFFITAAWWGLFTIPMIKHVHQRYYIKKEPHIVINSFKRLGQTMKRIRQYRALFLFLLAYFFYIDGVGTIITMSTSYGSDLGIGSSSLLIILFVTQVVAAPFSIIYGKLAERFTGKTMLYVGIVIYMIVCVYAYFMETTLDFWILAMLVATSQGGIQALSRSYFAKLVPKRHANEFFGFYNIFGKFASIMGPLLIAVTAQLTGKSSTAVFSLIILFVIGIVILAFVPEETSTDVSQQQNDLPL</sequence>
<evidence type="ECO:0000255" key="1"/>
<evidence type="ECO:0000305" key="2"/>
<accession>P42306</accession>
<dbReference type="EMBL" id="D83026">
    <property type="protein sequence ID" value="BAA11694.1"/>
    <property type="molecule type" value="Genomic_DNA"/>
</dbReference>
<dbReference type="EMBL" id="AL009126">
    <property type="protein sequence ID" value="CAB15946.1"/>
    <property type="molecule type" value="Genomic_DNA"/>
</dbReference>
<dbReference type="PIR" id="B70078">
    <property type="entry name" value="B70078"/>
</dbReference>
<dbReference type="RefSeq" id="NP_391789.1">
    <property type="nucleotide sequence ID" value="NC_000964.3"/>
</dbReference>
<dbReference type="RefSeq" id="WP_009968391.1">
    <property type="nucleotide sequence ID" value="NZ_OZ025638.1"/>
</dbReference>
<dbReference type="SMR" id="P42306"/>
<dbReference type="FunCoup" id="P42306">
    <property type="interactions" value="80"/>
</dbReference>
<dbReference type="STRING" id="224308.BSU39100"/>
<dbReference type="PaxDb" id="224308-BSU39100"/>
<dbReference type="EnsemblBacteria" id="CAB15946">
    <property type="protein sequence ID" value="CAB15946"/>
    <property type="gene ID" value="BSU_39100"/>
</dbReference>
<dbReference type="GeneID" id="937480"/>
<dbReference type="KEGG" id="bsu:BSU39100"/>
<dbReference type="PATRIC" id="fig|224308.43.peg.4103"/>
<dbReference type="eggNOG" id="COG2270">
    <property type="taxonomic scope" value="Bacteria"/>
</dbReference>
<dbReference type="InParanoid" id="P42306"/>
<dbReference type="OrthoDB" id="9768783at2"/>
<dbReference type="PhylomeDB" id="P42306"/>
<dbReference type="BioCyc" id="BSUB:BSU39100-MONOMER"/>
<dbReference type="Proteomes" id="UP000001570">
    <property type="component" value="Chromosome"/>
</dbReference>
<dbReference type="GO" id="GO:0005886">
    <property type="term" value="C:plasma membrane"/>
    <property type="evidence" value="ECO:0007669"/>
    <property type="project" value="UniProtKB-SubCell"/>
</dbReference>
<dbReference type="GO" id="GO:0022857">
    <property type="term" value="F:transmembrane transporter activity"/>
    <property type="evidence" value="ECO:0007669"/>
    <property type="project" value="InterPro"/>
</dbReference>
<dbReference type="CDD" id="cd17482">
    <property type="entry name" value="MFS_YxiO_like"/>
    <property type="match status" value="1"/>
</dbReference>
<dbReference type="Gene3D" id="1.20.1250.20">
    <property type="entry name" value="MFS general substrate transporter like domains"/>
    <property type="match status" value="2"/>
</dbReference>
<dbReference type="InterPro" id="IPR024671">
    <property type="entry name" value="Atg22-like"/>
</dbReference>
<dbReference type="InterPro" id="IPR050495">
    <property type="entry name" value="ATG22/LtaA_families"/>
</dbReference>
<dbReference type="InterPro" id="IPR020846">
    <property type="entry name" value="MFS_dom"/>
</dbReference>
<dbReference type="InterPro" id="IPR036259">
    <property type="entry name" value="MFS_trans_sf"/>
</dbReference>
<dbReference type="PANTHER" id="PTHR23519">
    <property type="entry name" value="AUTOPHAGY-RELATED PROTEIN 22"/>
    <property type="match status" value="1"/>
</dbReference>
<dbReference type="PANTHER" id="PTHR23519:SF1">
    <property type="entry name" value="AUTOPHAGY-RELATED PROTEIN 22"/>
    <property type="match status" value="1"/>
</dbReference>
<dbReference type="Pfam" id="PF11700">
    <property type="entry name" value="ATG22"/>
    <property type="match status" value="1"/>
</dbReference>
<dbReference type="SUPFAM" id="SSF103473">
    <property type="entry name" value="MFS general substrate transporter"/>
    <property type="match status" value="1"/>
</dbReference>
<dbReference type="PROSITE" id="PS50850">
    <property type="entry name" value="MFS"/>
    <property type="match status" value="1"/>
</dbReference>
<protein>
    <recommendedName>
        <fullName>Uncharacterized MFS-type transporter YxiO</fullName>
    </recommendedName>
</protein>
<proteinExistence type="inferred from homology"/>
<comment type="subcellular location">
    <subcellularLocation>
        <location evidence="2">Cell membrane</location>
        <topology evidence="2">Multi-pass membrane protein</topology>
    </subcellularLocation>
</comment>
<comment type="similarity">
    <text evidence="2">Belongs to the major facilitator superfamily.</text>
</comment>
<gene>
    <name type="primary">yxiO</name>
    <name type="synonym">S3AR</name>
    <name type="ordered locus">BSU39100</name>
</gene>
<keyword id="KW-1003">Cell membrane</keyword>
<keyword id="KW-0472">Membrane</keyword>
<keyword id="KW-1185">Reference proteome</keyword>
<keyword id="KW-0812">Transmembrane</keyword>
<keyword id="KW-1133">Transmembrane helix</keyword>
<keyword id="KW-0813">Transport</keyword>
<reference key="1">
    <citation type="journal article" date="1996" name="Microbiology">
        <title>Sequencing of a 65 kb region of the Bacillus subtilis genome containing the lic and cel loci, and creation of a 177 kb contig covering the gnt-sacXY region.</title>
        <authorList>
            <person name="Yoshida K."/>
            <person name="Shindo K."/>
            <person name="Sano H."/>
            <person name="Seki S."/>
            <person name="Fujimura M."/>
            <person name="Yanai N."/>
            <person name="Miwa Y."/>
            <person name="Fujita Y."/>
        </authorList>
    </citation>
    <scope>NUCLEOTIDE SEQUENCE [GENOMIC DNA]</scope>
    <source>
        <strain>168 / BGSC1A1</strain>
    </source>
</reference>
<reference key="2">
    <citation type="journal article" date="1997" name="Nature">
        <title>The complete genome sequence of the Gram-positive bacterium Bacillus subtilis.</title>
        <authorList>
            <person name="Kunst F."/>
            <person name="Ogasawara N."/>
            <person name="Moszer I."/>
            <person name="Albertini A.M."/>
            <person name="Alloni G."/>
            <person name="Azevedo V."/>
            <person name="Bertero M.G."/>
            <person name="Bessieres P."/>
            <person name="Bolotin A."/>
            <person name="Borchert S."/>
            <person name="Borriss R."/>
            <person name="Boursier L."/>
            <person name="Brans A."/>
            <person name="Braun M."/>
            <person name="Brignell S.C."/>
            <person name="Bron S."/>
            <person name="Brouillet S."/>
            <person name="Bruschi C.V."/>
            <person name="Caldwell B."/>
            <person name="Capuano V."/>
            <person name="Carter N.M."/>
            <person name="Choi S.-K."/>
            <person name="Codani J.-J."/>
            <person name="Connerton I.F."/>
            <person name="Cummings N.J."/>
            <person name="Daniel R.A."/>
            <person name="Denizot F."/>
            <person name="Devine K.M."/>
            <person name="Duesterhoeft A."/>
            <person name="Ehrlich S.D."/>
            <person name="Emmerson P.T."/>
            <person name="Entian K.-D."/>
            <person name="Errington J."/>
            <person name="Fabret C."/>
            <person name="Ferrari E."/>
            <person name="Foulger D."/>
            <person name="Fritz C."/>
            <person name="Fujita M."/>
            <person name="Fujita Y."/>
            <person name="Fuma S."/>
            <person name="Galizzi A."/>
            <person name="Galleron N."/>
            <person name="Ghim S.-Y."/>
            <person name="Glaser P."/>
            <person name="Goffeau A."/>
            <person name="Golightly E.J."/>
            <person name="Grandi G."/>
            <person name="Guiseppi G."/>
            <person name="Guy B.J."/>
            <person name="Haga K."/>
            <person name="Haiech J."/>
            <person name="Harwood C.R."/>
            <person name="Henaut A."/>
            <person name="Hilbert H."/>
            <person name="Holsappel S."/>
            <person name="Hosono S."/>
            <person name="Hullo M.-F."/>
            <person name="Itaya M."/>
            <person name="Jones L.-M."/>
            <person name="Joris B."/>
            <person name="Karamata D."/>
            <person name="Kasahara Y."/>
            <person name="Klaerr-Blanchard M."/>
            <person name="Klein C."/>
            <person name="Kobayashi Y."/>
            <person name="Koetter P."/>
            <person name="Koningstein G."/>
            <person name="Krogh S."/>
            <person name="Kumano M."/>
            <person name="Kurita K."/>
            <person name="Lapidus A."/>
            <person name="Lardinois S."/>
            <person name="Lauber J."/>
            <person name="Lazarevic V."/>
            <person name="Lee S.-M."/>
            <person name="Levine A."/>
            <person name="Liu H."/>
            <person name="Masuda S."/>
            <person name="Mauel C."/>
            <person name="Medigue C."/>
            <person name="Medina N."/>
            <person name="Mellado R.P."/>
            <person name="Mizuno M."/>
            <person name="Moestl D."/>
            <person name="Nakai S."/>
            <person name="Noback M."/>
            <person name="Noone D."/>
            <person name="O'Reilly M."/>
            <person name="Ogawa K."/>
            <person name="Ogiwara A."/>
            <person name="Oudega B."/>
            <person name="Park S.-H."/>
            <person name="Parro V."/>
            <person name="Pohl T.M."/>
            <person name="Portetelle D."/>
            <person name="Porwollik S."/>
            <person name="Prescott A.M."/>
            <person name="Presecan E."/>
            <person name="Pujic P."/>
            <person name="Purnelle B."/>
            <person name="Rapoport G."/>
            <person name="Rey M."/>
            <person name="Reynolds S."/>
            <person name="Rieger M."/>
            <person name="Rivolta C."/>
            <person name="Rocha E."/>
            <person name="Roche B."/>
            <person name="Rose M."/>
            <person name="Sadaie Y."/>
            <person name="Sato T."/>
            <person name="Scanlan E."/>
            <person name="Schleich S."/>
            <person name="Schroeter R."/>
            <person name="Scoffone F."/>
            <person name="Sekiguchi J."/>
            <person name="Sekowska A."/>
            <person name="Seror S.J."/>
            <person name="Serror P."/>
            <person name="Shin B.-S."/>
            <person name="Soldo B."/>
            <person name="Sorokin A."/>
            <person name="Tacconi E."/>
            <person name="Takagi T."/>
            <person name="Takahashi H."/>
            <person name="Takemaru K."/>
            <person name="Takeuchi M."/>
            <person name="Tamakoshi A."/>
            <person name="Tanaka T."/>
            <person name="Terpstra P."/>
            <person name="Tognoni A."/>
            <person name="Tosato V."/>
            <person name="Uchiyama S."/>
            <person name="Vandenbol M."/>
            <person name="Vannier F."/>
            <person name="Vassarotti A."/>
            <person name="Viari A."/>
            <person name="Wambutt R."/>
            <person name="Wedler E."/>
            <person name="Wedler H."/>
            <person name="Weitzenegger T."/>
            <person name="Winters P."/>
            <person name="Wipat A."/>
            <person name="Yamamoto H."/>
            <person name="Yamane K."/>
            <person name="Yasumoto K."/>
            <person name="Yata K."/>
            <person name="Yoshida K."/>
            <person name="Yoshikawa H.-F."/>
            <person name="Zumstein E."/>
            <person name="Yoshikawa H."/>
            <person name="Danchin A."/>
        </authorList>
    </citation>
    <scope>NUCLEOTIDE SEQUENCE [LARGE SCALE GENOMIC DNA]</scope>
    <source>
        <strain>168</strain>
    </source>
</reference>
<organism>
    <name type="scientific">Bacillus subtilis (strain 168)</name>
    <dbReference type="NCBI Taxonomy" id="224308"/>
    <lineage>
        <taxon>Bacteria</taxon>
        <taxon>Bacillati</taxon>
        <taxon>Bacillota</taxon>
        <taxon>Bacilli</taxon>
        <taxon>Bacillales</taxon>
        <taxon>Bacillaceae</taxon>
        <taxon>Bacillus</taxon>
    </lineage>
</organism>